<accession>A4G8J0</accession>
<gene>
    <name evidence="1" type="primary">uppP</name>
    <name type="synonym">bacA</name>
    <name type="ordered locus">HEAR2705</name>
</gene>
<name>UPPP_HERAR</name>
<comment type="function">
    <text evidence="1">Catalyzes the dephosphorylation of undecaprenyl diphosphate (UPP). Confers resistance to bacitracin.</text>
</comment>
<comment type="catalytic activity">
    <reaction evidence="1">
        <text>di-trans,octa-cis-undecaprenyl diphosphate + H2O = di-trans,octa-cis-undecaprenyl phosphate + phosphate + H(+)</text>
        <dbReference type="Rhea" id="RHEA:28094"/>
        <dbReference type="ChEBI" id="CHEBI:15377"/>
        <dbReference type="ChEBI" id="CHEBI:15378"/>
        <dbReference type="ChEBI" id="CHEBI:43474"/>
        <dbReference type="ChEBI" id="CHEBI:58405"/>
        <dbReference type="ChEBI" id="CHEBI:60392"/>
        <dbReference type="EC" id="3.6.1.27"/>
    </reaction>
</comment>
<comment type="subcellular location">
    <subcellularLocation>
        <location evidence="1">Cell inner membrane</location>
        <topology evidence="1">Multi-pass membrane protein</topology>
    </subcellularLocation>
</comment>
<comment type="miscellaneous">
    <text>Bacitracin is thought to be involved in the inhibition of peptidoglycan synthesis by sequestering undecaprenyl diphosphate, thereby reducing the pool of lipid carrier available.</text>
</comment>
<comment type="similarity">
    <text evidence="1">Belongs to the UppP family.</text>
</comment>
<keyword id="KW-0046">Antibiotic resistance</keyword>
<keyword id="KW-0997">Cell inner membrane</keyword>
<keyword id="KW-1003">Cell membrane</keyword>
<keyword id="KW-0133">Cell shape</keyword>
<keyword id="KW-0961">Cell wall biogenesis/degradation</keyword>
<keyword id="KW-0378">Hydrolase</keyword>
<keyword id="KW-0472">Membrane</keyword>
<keyword id="KW-0573">Peptidoglycan synthesis</keyword>
<keyword id="KW-1185">Reference proteome</keyword>
<keyword id="KW-0812">Transmembrane</keyword>
<keyword id="KW-1133">Transmembrane helix</keyword>
<protein>
    <recommendedName>
        <fullName evidence="1">Undecaprenyl-diphosphatase</fullName>
        <ecNumber evidence="1">3.6.1.27</ecNumber>
    </recommendedName>
    <alternativeName>
        <fullName evidence="1">Bacitracin resistance protein</fullName>
    </alternativeName>
    <alternativeName>
        <fullName evidence="1">Undecaprenyl pyrophosphate phosphatase</fullName>
    </alternativeName>
</protein>
<reference key="1">
    <citation type="journal article" date="2007" name="PLoS Genet.">
        <title>A tale of two oxidation states: bacterial colonization of arsenic-rich environments.</title>
        <authorList>
            <person name="Muller D."/>
            <person name="Medigue C."/>
            <person name="Koechler S."/>
            <person name="Barbe V."/>
            <person name="Barakat M."/>
            <person name="Talla E."/>
            <person name="Bonnefoy V."/>
            <person name="Krin E."/>
            <person name="Arsene-Ploetze F."/>
            <person name="Carapito C."/>
            <person name="Chandler M."/>
            <person name="Cournoyer B."/>
            <person name="Cruveiller S."/>
            <person name="Dossat C."/>
            <person name="Duval S."/>
            <person name="Heymann M."/>
            <person name="Leize E."/>
            <person name="Lieutaud A."/>
            <person name="Lievremont D."/>
            <person name="Makita Y."/>
            <person name="Mangenot S."/>
            <person name="Nitschke W."/>
            <person name="Ortet P."/>
            <person name="Perdrial N."/>
            <person name="Schoepp B."/>
            <person name="Siguier P."/>
            <person name="Simeonova D.D."/>
            <person name="Rouy Z."/>
            <person name="Segurens B."/>
            <person name="Turlin E."/>
            <person name="Vallenet D."/>
            <person name="van Dorsselaer A."/>
            <person name="Weiss S."/>
            <person name="Weissenbach J."/>
            <person name="Lett M.-C."/>
            <person name="Danchin A."/>
            <person name="Bertin P.N."/>
        </authorList>
    </citation>
    <scope>NUCLEOTIDE SEQUENCE [LARGE SCALE GENOMIC DNA]</scope>
    <source>
        <strain>ULPAs1</strain>
    </source>
</reference>
<evidence type="ECO:0000255" key="1">
    <source>
        <dbReference type="HAMAP-Rule" id="MF_01006"/>
    </source>
</evidence>
<dbReference type="EC" id="3.6.1.27" evidence="1"/>
<dbReference type="EMBL" id="CU207211">
    <property type="protein sequence ID" value="CAL62827.1"/>
    <property type="molecule type" value="Genomic_DNA"/>
</dbReference>
<dbReference type="SMR" id="A4G8J0"/>
<dbReference type="STRING" id="204773.HEAR2705"/>
<dbReference type="KEGG" id="har:HEAR2705"/>
<dbReference type="eggNOG" id="COG1968">
    <property type="taxonomic scope" value="Bacteria"/>
</dbReference>
<dbReference type="HOGENOM" id="CLU_060296_2_0_4"/>
<dbReference type="OrthoDB" id="9808289at2"/>
<dbReference type="Proteomes" id="UP000006697">
    <property type="component" value="Chromosome"/>
</dbReference>
<dbReference type="GO" id="GO:0005886">
    <property type="term" value="C:plasma membrane"/>
    <property type="evidence" value="ECO:0007669"/>
    <property type="project" value="UniProtKB-SubCell"/>
</dbReference>
<dbReference type="GO" id="GO:0050380">
    <property type="term" value="F:undecaprenyl-diphosphatase activity"/>
    <property type="evidence" value="ECO:0007669"/>
    <property type="project" value="UniProtKB-UniRule"/>
</dbReference>
<dbReference type="GO" id="GO:0071555">
    <property type="term" value="P:cell wall organization"/>
    <property type="evidence" value="ECO:0007669"/>
    <property type="project" value="UniProtKB-KW"/>
</dbReference>
<dbReference type="GO" id="GO:0009252">
    <property type="term" value="P:peptidoglycan biosynthetic process"/>
    <property type="evidence" value="ECO:0007669"/>
    <property type="project" value="UniProtKB-KW"/>
</dbReference>
<dbReference type="GO" id="GO:0008360">
    <property type="term" value="P:regulation of cell shape"/>
    <property type="evidence" value="ECO:0007669"/>
    <property type="project" value="UniProtKB-KW"/>
</dbReference>
<dbReference type="GO" id="GO:0046677">
    <property type="term" value="P:response to antibiotic"/>
    <property type="evidence" value="ECO:0007669"/>
    <property type="project" value="UniProtKB-UniRule"/>
</dbReference>
<dbReference type="HAMAP" id="MF_01006">
    <property type="entry name" value="Undec_diphosphatase"/>
    <property type="match status" value="1"/>
</dbReference>
<dbReference type="InterPro" id="IPR003824">
    <property type="entry name" value="UppP"/>
</dbReference>
<dbReference type="NCBIfam" id="NF001389">
    <property type="entry name" value="PRK00281.1-2"/>
    <property type="match status" value="1"/>
</dbReference>
<dbReference type="NCBIfam" id="NF001390">
    <property type="entry name" value="PRK00281.1-4"/>
    <property type="match status" value="1"/>
</dbReference>
<dbReference type="NCBIfam" id="TIGR00753">
    <property type="entry name" value="undec_PP_bacA"/>
    <property type="match status" value="1"/>
</dbReference>
<dbReference type="PANTHER" id="PTHR30622">
    <property type="entry name" value="UNDECAPRENYL-DIPHOSPHATASE"/>
    <property type="match status" value="1"/>
</dbReference>
<dbReference type="PANTHER" id="PTHR30622:SF3">
    <property type="entry name" value="UNDECAPRENYL-DIPHOSPHATASE"/>
    <property type="match status" value="1"/>
</dbReference>
<dbReference type="Pfam" id="PF02673">
    <property type="entry name" value="BacA"/>
    <property type="match status" value="1"/>
</dbReference>
<organism>
    <name type="scientific">Herminiimonas arsenicoxydans</name>
    <dbReference type="NCBI Taxonomy" id="204773"/>
    <lineage>
        <taxon>Bacteria</taxon>
        <taxon>Pseudomonadati</taxon>
        <taxon>Pseudomonadota</taxon>
        <taxon>Betaproteobacteria</taxon>
        <taxon>Burkholderiales</taxon>
        <taxon>Oxalobacteraceae</taxon>
        <taxon>Herminiimonas</taxon>
    </lineage>
</organism>
<feature type="chain" id="PRO_0000303029" description="Undecaprenyl-diphosphatase">
    <location>
        <begin position="1"/>
        <end position="277"/>
    </location>
</feature>
<feature type="transmembrane region" description="Helical" evidence="1">
    <location>
        <begin position="85"/>
        <end position="105"/>
    </location>
</feature>
<feature type="transmembrane region" description="Helical" evidence="1">
    <location>
        <begin position="109"/>
        <end position="129"/>
    </location>
</feature>
<feature type="transmembrane region" description="Helical" evidence="1">
    <location>
        <begin position="188"/>
        <end position="208"/>
    </location>
</feature>
<feature type="transmembrane region" description="Helical" evidence="1">
    <location>
        <begin position="218"/>
        <end position="238"/>
    </location>
</feature>
<feature type="transmembrane region" description="Helical" evidence="1">
    <location>
        <begin position="256"/>
        <end position="276"/>
    </location>
</feature>
<proteinExistence type="inferred from homology"/>
<sequence>MDTILALKVIIMGIVEGLTEFLPISSTGHLILAGSLLEFTGPKVKVFEIAIQTGAMLAVVWEYRVKIAAVLGGLFTERRAQKFAVNIVVAFLPAALLGLVFAGAIKEKLFAPVPVAIAFIVGGFVILWVERRNKQQVHAERVQSVDEMTLLDAFKVGCAQAFALIPGTSRSGASIIGGMMFGLSRKAATEFSFFLAIPTLMGATVYSVYKDRALLSMADIPLFGLGGLAAFFSAFLCVRWLLRYISTHDFTFFAYYRIGFGLFVLLSAHYGWVVWAE</sequence>